<organism>
    <name type="scientific">Homo sapiens</name>
    <name type="common">Human</name>
    <dbReference type="NCBI Taxonomy" id="9606"/>
    <lineage>
        <taxon>Eukaryota</taxon>
        <taxon>Metazoa</taxon>
        <taxon>Chordata</taxon>
        <taxon>Craniata</taxon>
        <taxon>Vertebrata</taxon>
        <taxon>Euteleostomi</taxon>
        <taxon>Mammalia</taxon>
        <taxon>Eutheria</taxon>
        <taxon>Euarchontoglires</taxon>
        <taxon>Primates</taxon>
        <taxon>Haplorrhini</taxon>
        <taxon>Catarrhini</taxon>
        <taxon>Hominidae</taxon>
        <taxon>Homo</taxon>
    </lineage>
</organism>
<comment type="function">
    <text evidence="7 8 10 11">Poly(A) polymerase that creates the 3'-poly(A) tail of specific pre-mRNAs (PubMed:18288197, PubMed:21102410). Localizes to nuclear speckles together with PIP5K1A and mediates polyadenylation of a select set of mRNAs, such as HMOX1 (PubMed:18288197). In addition to polyadenylation, it is also required for the 3'-end cleavage of pre-mRNAs: binds to the 3'UTR of targeted pre-mRNAs and promotes the recruitment and assembly of the CPSF complex on the 3'UTR of pre-mRNAs (PubMed:21102410). In addition to adenylyltransferase activity, also has uridylyltransferase activity (PubMed:16790842, PubMed:18288197, PubMed:28589955). However, the ATP ratio is higher than UTP in cells, suggesting that it functions primarily as a poly(A) polymerase (PubMed:18288197). Acts as a specific terminal uridylyltransferase for U6 snRNA in vitro: responsible for a controlled elongation reaction that results in the restoration of the four 3'-terminal UMP-residues found in newly transcribed U6 snRNA (PubMed:16790842, PubMed:18288197, PubMed:28589955). Not involved in replication-dependent histone mRNA degradation.</text>
</comment>
<comment type="catalytic activity">
    <reaction evidence="7 8 11">
        <text>RNA(n) + UTP = RNA(n)-3'-uridine ribonucleotide + diphosphate</text>
        <dbReference type="Rhea" id="RHEA:14785"/>
        <dbReference type="Rhea" id="RHEA-COMP:14527"/>
        <dbReference type="Rhea" id="RHEA-COMP:17348"/>
        <dbReference type="ChEBI" id="CHEBI:33019"/>
        <dbReference type="ChEBI" id="CHEBI:46398"/>
        <dbReference type="ChEBI" id="CHEBI:140395"/>
        <dbReference type="ChEBI" id="CHEBI:173116"/>
        <dbReference type="EC" id="2.7.7.52"/>
    </reaction>
</comment>
<comment type="catalytic activity">
    <reaction evidence="8 10 11">
        <text>RNA(n) + ATP = RNA(n)-3'-adenine ribonucleotide + diphosphate</text>
        <dbReference type="Rhea" id="RHEA:11332"/>
        <dbReference type="Rhea" id="RHEA-COMP:14527"/>
        <dbReference type="Rhea" id="RHEA-COMP:17347"/>
        <dbReference type="ChEBI" id="CHEBI:30616"/>
        <dbReference type="ChEBI" id="CHEBI:33019"/>
        <dbReference type="ChEBI" id="CHEBI:140395"/>
        <dbReference type="ChEBI" id="CHEBI:173115"/>
        <dbReference type="EC" id="2.7.7.19"/>
    </reaction>
</comment>
<comment type="cofactor">
    <cofactor evidence="13">
        <name>Mg(2+)</name>
        <dbReference type="ChEBI" id="CHEBI:18420"/>
    </cofactor>
    <cofactor evidence="2">
        <name>Mn(2+)</name>
        <dbReference type="ChEBI" id="CHEBI:29035"/>
    </cofactor>
    <text evidence="11">Binds 1 divalent cation per subunit.</text>
</comment>
<comment type="activity regulation">
    <text evidence="8">Adenylyltransferase activity is specifically phosphatidylinositol 4,5-bisphosphate (PtdIns(4,5)P2).</text>
</comment>
<comment type="biophysicochemical properties">
    <kinetics>
        <KM evidence="11">59 uM for UTP</KM>
        <KM evidence="11">1380 uM for ATP</KM>
        <KM evidence="11">55 uM for U6 snRNA-u4</KM>
        <text evidence="11">kcat is 0.059 sec(-1) with UTP as substrate. kcat is 0.002 sec(-1) with ATP as substrate. kcat is 0.061 sec(-1) with U6 snRNA-u4 as substrate.</text>
    </kinetics>
</comment>
<comment type="subunit">
    <text evidence="8 10">Associates with the cleavage and polyadenylation specificity factor (CPSF) complex (PubMed:21102410). Interacts with CPSF1 and CPSF3; the interaction is direct (PubMed:21102410). Interacts with PIP5K1A (PubMed:18288197).</text>
</comment>
<comment type="interaction">
    <interactant intactId="EBI-2511680">
        <id>Q9H6E5</id>
    </interactant>
    <interactant intactId="EBI-715394">
        <id>Q9H079</id>
        <label>KATNBL1</label>
    </interactant>
    <organismsDiffer>false</organismsDiffer>
    <experiments>3</experiments>
</comment>
<comment type="interaction">
    <interactant intactId="EBI-2511680">
        <id>Q9H6E5</id>
    </interactant>
    <interactant intactId="EBI-726414">
        <id>Q99755</id>
        <label>PIP5K1A</label>
    </interactant>
    <organismsDiffer>false</organismsDiffer>
    <experiments>3</experiments>
</comment>
<comment type="interaction">
    <interactant intactId="EBI-2511680">
        <id>Q9H6E5</id>
    </interactant>
    <interactant intactId="EBI-15687389">
        <id>Q99755-1</id>
        <label>PIP5K1A</label>
    </interactant>
    <organismsDiffer>false</organismsDiffer>
    <experiments>2</experiments>
</comment>
<comment type="subcellular location">
    <subcellularLocation>
        <location evidence="7">Nucleus</location>
        <location evidence="7">Nucleolus</location>
    </subcellularLocation>
    <subcellularLocation>
        <location evidence="8 9">Nucleus speckle</location>
    </subcellularLocation>
</comment>
<comment type="tissue specificity">
    <text evidence="8">Widely expressed.</text>
</comment>
<comment type="domain">
    <text evidence="11">The zinc-finger domain is required for terminal uridylyltransferase activity (PubMed:28589955). Together with the RRM domain, binds the 5'-area of U6 snRNA (PubMed:28589955).</text>
</comment>
<comment type="domain">
    <text evidence="11">The RRM domain is required for terminal uridylyltransferase activity (PubMed:28589955). Together with the zinc-finger domain, binds the 5'-area of U6 snRNA (PubMed:28589955).</text>
</comment>
<comment type="domain">
    <text evidence="11">The proline-rich region is dispensable for terminal uridylyltransferase activity.</text>
</comment>
<comment type="PTM">
    <text evidence="9">Phosphorylated by CK1 in the proline-rich (Pro-rich) region.</text>
</comment>
<comment type="similarity">
    <text evidence="12">Belongs to the DNA polymerase type-B-like family.</text>
</comment>
<comment type="sequence caution" evidence="12">
    <conflict type="erroneous initiation">
        <sequence resource="EMBL-CDS" id="BAB15282"/>
    </conflict>
    <text>Truncated N-terminus.</text>
</comment>
<feature type="chain" id="PRO_0000254186" description="Speckle targeted PIP5K1A-regulated poly(A) polymerase">
    <location>
        <begin position="1"/>
        <end position="874"/>
    </location>
</feature>
<feature type="domain" description="RRM" evidence="5">
    <location>
        <begin position="56"/>
        <end position="128"/>
    </location>
</feature>
<feature type="domain" description="PAP-associated" evidence="3">
    <location>
        <begin position="491"/>
        <end position="549"/>
    </location>
</feature>
<feature type="zinc finger region" description="Matrin-type" evidence="4">
    <location>
        <begin position="16"/>
        <end position="46"/>
    </location>
</feature>
<feature type="region of interest" description="Disordered" evidence="6">
    <location>
        <begin position="113"/>
        <end position="146"/>
    </location>
</feature>
<feature type="region of interest" description="Disordered" evidence="6">
    <location>
        <begin position="252"/>
        <end position="334"/>
    </location>
</feature>
<feature type="region of interest" description="KA1; binds the bulging loops of U6 snRNA but is dispensable for terminal uridylyltransferase activity" evidence="11">
    <location>
        <begin position="598"/>
        <end position="874"/>
    </location>
</feature>
<feature type="region of interest" description="Disordered" evidence="6">
    <location>
        <begin position="638"/>
        <end position="662"/>
    </location>
</feature>
<feature type="region of interest" description="Disordered" evidence="6">
    <location>
        <begin position="705"/>
        <end position="761"/>
    </location>
</feature>
<feature type="compositionally biased region" description="Pro residues" evidence="6">
    <location>
        <begin position="259"/>
        <end position="269"/>
    </location>
</feature>
<feature type="compositionally biased region" description="Polar residues" evidence="6">
    <location>
        <begin position="280"/>
        <end position="291"/>
    </location>
</feature>
<feature type="binding site" evidence="11 17">
    <location>
        <position position="205"/>
    </location>
    <ligand>
        <name>ATP</name>
        <dbReference type="ChEBI" id="CHEBI:30616"/>
    </ligand>
</feature>
<feature type="binding site" evidence="11">
    <location>
        <position position="216"/>
    </location>
    <ligand>
        <name>Mg(2+)</name>
        <dbReference type="ChEBI" id="CHEBI:18420"/>
        <note>catalytic</note>
    </ligand>
</feature>
<feature type="binding site" evidence="11 15 16">
    <location>
        <position position="216"/>
    </location>
    <ligand>
        <name>UTP</name>
        <dbReference type="ChEBI" id="CHEBI:46398"/>
    </ligand>
</feature>
<feature type="binding site" evidence="11">
    <location>
        <position position="218"/>
    </location>
    <ligand>
        <name>Mg(2+)</name>
        <dbReference type="ChEBI" id="CHEBI:18420"/>
        <note>catalytic</note>
    </ligand>
</feature>
<feature type="binding site" evidence="11 15 16">
    <location>
        <position position="218"/>
    </location>
    <ligand>
        <name>UTP</name>
        <dbReference type="ChEBI" id="CHEBI:46398"/>
    </ligand>
</feature>
<feature type="binding site" evidence="11 17">
    <location>
        <position position="392"/>
    </location>
    <ligand>
        <name>ATP</name>
        <dbReference type="ChEBI" id="CHEBI:30616"/>
    </ligand>
</feature>
<feature type="binding site" evidence="11 15 16">
    <location>
        <position position="392"/>
    </location>
    <ligand>
        <name>UTP</name>
        <dbReference type="ChEBI" id="CHEBI:46398"/>
    </ligand>
</feature>
<feature type="binding site" evidence="11 15 16">
    <location>
        <position position="414"/>
    </location>
    <ligand>
        <name>UTP</name>
        <dbReference type="ChEBI" id="CHEBI:46398"/>
    </ligand>
</feature>
<feature type="binding site" evidence="11 15 16">
    <location>
        <position position="432"/>
    </location>
    <ligand>
        <name>UTP</name>
        <dbReference type="ChEBI" id="CHEBI:46398"/>
    </ligand>
</feature>
<feature type="binding site" evidence="11 15 16">
    <location>
        <position position="549"/>
    </location>
    <ligand>
        <name>UTP</name>
        <dbReference type="ChEBI" id="CHEBI:46398"/>
    </ligand>
</feature>
<feature type="modified residue" description="Phosphoserine" evidence="1">
    <location>
        <position position="750"/>
    </location>
</feature>
<feature type="sequence variant" id="VAR_028833" description="In dbSNP:rs3197865.">
    <original>L</original>
    <variation>F</variation>
    <location>
        <position position="442"/>
    </location>
</feature>
<feature type="mutagenesis site" description="Abolishes adenylyltransferase activity; when associated with A-218." evidence="8">
    <original>D</original>
    <variation>A</variation>
    <location>
        <position position="216"/>
    </location>
</feature>
<feature type="mutagenesis site" description="Abolishes adenylyltransferase activity; when associated with A-216." evidence="8">
    <original>D</original>
    <variation>A</variation>
    <location>
        <position position="218"/>
    </location>
</feature>
<feature type="mutagenesis site" description="Reduced terminal uridylyltransferase activity; when associated with A-783." evidence="11">
    <original>R</original>
    <variation>A</variation>
    <location>
        <position position="779"/>
    </location>
</feature>
<feature type="mutagenesis site" description="Reduced terminal uridylyltransferase activity; when associated with A-779." evidence="11">
    <original>R</original>
    <variation>A</variation>
    <location>
        <position position="783"/>
    </location>
</feature>
<feature type="sequence conflict" description="In Ref. 1; BAB15314." evidence="12" ref="1">
    <original>D</original>
    <variation>G</variation>
    <location>
        <position position="66"/>
    </location>
</feature>
<feature type="sequence conflict" description="In Ref. 1; BAF85299." evidence="12" ref="1">
    <original>Q</original>
    <variation>R</variation>
    <location>
        <position position="809"/>
    </location>
</feature>
<feature type="strand" evidence="22">
    <location>
        <begin position="57"/>
        <end position="61"/>
    </location>
</feature>
<feature type="helix" evidence="22">
    <location>
        <begin position="69"/>
        <end position="76"/>
    </location>
</feature>
<feature type="helix" evidence="22">
    <location>
        <begin position="77"/>
        <end position="79"/>
    </location>
</feature>
<feature type="strand" evidence="22">
    <location>
        <begin position="82"/>
        <end position="87"/>
    </location>
</feature>
<feature type="turn" evidence="22">
    <location>
        <begin position="89"/>
        <end position="91"/>
    </location>
</feature>
<feature type="strand" evidence="22">
    <location>
        <begin position="95"/>
        <end position="101"/>
    </location>
</feature>
<feature type="helix" evidence="22">
    <location>
        <begin position="102"/>
        <end position="110"/>
    </location>
</feature>
<feature type="strand" evidence="22">
    <location>
        <begin position="122"/>
        <end position="125"/>
    </location>
</feature>
<feature type="helix" evidence="20">
    <location>
        <begin position="148"/>
        <end position="155"/>
    </location>
</feature>
<feature type="strand" evidence="20">
    <location>
        <begin position="156"/>
        <end position="158"/>
    </location>
</feature>
<feature type="helix" evidence="20">
    <location>
        <begin position="159"/>
        <end position="170"/>
    </location>
</feature>
<feature type="helix" evidence="20">
    <location>
        <begin position="174"/>
        <end position="194"/>
    </location>
</feature>
<feature type="strand" evidence="20">
    <location>
        <begin position="199"/>
        <end position="203"/>
    </location>
</feature>
<feature type="helix" evidence="20">
    <location>
        <begin position="204"/>
        <end position="206"/>
    </location>
</feature>
<feature type="strand" evidence="20">
    <location>
        <begin position="217"/>
        <end position="222"/>
    </location>
</feature>
<feature type="helix" evidence="20">
    <location>
        <begin position="330"/>
        <end position="350"/>
    </location>
</feature>
<feature type="strand" evidence="20">
    <location>
        <begin position="355"/>
        <end position="361"/>
    </location>
</feature>
<feature type="strand" evidence="20">
    <location>
        <begin position="364"/>
        <end position="366"/>
    </location>
</feature>
<feature type="strand" evidence="20">
    <location>
        <begin position="368"/>
        <end position="373"/>
    </location>
</feature>
<feature type="turn" evidence="20">
    <location>
        <begin position="374"/>
        <end position="377"/>
    </location>
</feature>
<feature type="strand" evidence="20">
    <location>
        <begin position="378"/>
        <end position="385"/>
    </location>
</feature>
<feature type="helix" evidence="20">
    <location>
        <begin position="388"/>
        <end position="402"/>
    </location>
</feature>
<feature type="helix" evidence="20">
    <location>
        <begin position="406"/>
        <end position="419"/>
    </location>
</feature>
<feature type="strand" evidence="20">
    <location>
        <begin position="423"/>
        <end position="429"/>
    </location>
</feature>
<feature type="helix" evidence="20">
    <location>
        <begin position="431"/>
        <end position="443"/>
    </location>
</feature>
<feature type="strand" evidence="20">
    <location>
        <begin position="444"/>
        <end position="447"/>
    </location>
</feature>
<feature type="helix" evidence="20">
    <location>
        <begin position="453"/>
        <end position="459"/>
    </location>
</feature>
<feature type="helix" evidence="20">
    <location>
        <begin position="479"/>
        <end position="481"/>
    </location>
</feature>
<feature type="helix" evidence="20">
    <location>
        <begin position="491"/>
        <end position="504"/>
    </location>
</feature>
<feature type="strand" evidence="20">
    <location>
        <begin position="510"/>
        <end position="513"/>
    </location>
</feature>
<feature type="turn" evidence="20">
    <location>
        <begin position="514"/>
        <end position="517"/>
    </location>
</feature>
<feature type="strand" evidence="20">
    <location>
        <begin position="518"/>
        <end position="521"/>
    </location>
</feature>
<feature type="strand" evidence="20">
    <location>
        <begin position="523"/>
        <end position="525"/>
    </location>
</feature>
<feature type="helix" evidence="20">
    <location>
        <begin position="526"/>
        <end position="529"/>
    </location>
</feature>
<feature type="strand" evidence="20">
    <location>
        <begin position="537"/>
        <end position="542"/>
    </location>
</feature>
<feature type="turn" evidence="20">
    <location>
        <begin position="551"/>
        <end position="554"/>
    </location>
</feature>
<feature type="helix" evidence="20">
    <location>
        <begin position="557"/>
        <end position="574"/>
    </location>
</feature>
<feature type="helix" evidence="20">
    <location>
        <begin position="577"/>
        <end position="580"/>
    </location>
</feature>
<feature type="strand" evidence="20">
    <location>
        <begin position="584"/>
        <end position="586"/>
    </location>
</feature>
<feature type="helix" evidence="20">
    <location>
        <begin position="591"/>
        <end position="595"/>
    </location>
</feature>
<feature type="helix" evidence="20">
    <location>
        <begin position="600"/>
        <end position="606"/>
    </location>
</feature>
<feature type="helix" evidence="20">
    <location>
        <begin position="616"/>
        <end position="628"/>
    </location>
</feature>
<feature type="strand" evidence="20">
    <location>
        <begin position="629"/>
        <end position="631"/>
    </location>
</feature>
<feature type="strand" evidence="20">
    <location>
        <begin position="634"/>
        <end position="636"/>
    </location>
</feature>
<feature type="strand" evidence="20">
    <location>
        <begin position="764"/>
        <end position="770"/>
    </location>
</feature>
<feature type="helix" evidence="20">
    <location>
        <begin position="778"/>
        <end position="791"/>
    </location>
</feature>
<feature type="helix" evidence="20">
    <location>
        <begin position="805"/>
        <end position="812"/>
    </location>
</feature>
<feature type="turn" evidence="21">
    <location>
        <begin position="816"/>
        <end position="819"/>
    </location>
</feature>
<feature type="strand" evidence="20">
    <location>
        <begin position="829"/>
        <end position="836"/>
    </location>
</feature>
<feature type="strand" evidence="20">
    <location>
        <begin position="838"/>
        <end position="840"/>
    </location>
</feature>
<feature type="strand" evidence="20">
    <location>
        <begin position="842"/>
        <end position="849"/>
    </location>
</feature>
<feature type="strand" evidence="20">
    <location>
        <begin position="851"/>
        <end position="853"/>
    </location>
</feature>
<feature type="helix" evidence="20">
    <location>
        <begin position="855"/>
        <end position="874"/>
    </location>
</feature>
<name>STPAP_HUMAN</name>
<dbReference type="EC" id="2.7.7.19" evidence="8 10 11"/>
<dbReference type="EC" id="2.7.7.52" evidence="7 8 11"/>
<dbReference type="EMBL" id="AK025920">
    <property type="protein sequence ID" value="BAB15282.1"/>
    <property type="status" value="ALT_INIT"/>
    <property type="molecule type" value="mRNA"/>
</dbReference>
<dbReference type="EMBL" id="AK026000">
    <property type="protein sequence ID" value="BAB15314.1"/>
    <property type="molecule type" value="mRNA"/>
</dbReference>
<dbReference type="EMBL" id="AK292610">
    <property type="protein sequence ID" value="BAF85299.1"/>
    <property type="molecule type" value="mRNA"/>
</dbReference>
<dbReference type="EMBL" id="AP002990">
    <property type="status" value="NOT_ANNOTATED_CDS"/>
    <property type="molecule type" value="Genomic_DNA"/>
</dbReference>
<dbReference type="EMBL" id="CH471076">
    <property type="protein sequence ID" value="EAW74029.1"/>
    <property type="molecule type" value="Genomic_DNA"/>
</dbReference>
<dbReference type="EMBL" id="BC005013">
    <property type="protein sequence ID" value="AAH05013.2"/>
    <property type="molecule type" value="mRNA"/>
</dbReference>
<dbReference type="EMBL" id="BC110910">
    <property type="protein sequence ID" value="AAI10911.1"/>
    <property type="molecule type" value="mRNA"/>
</dbReference>
<dbReference type="EMBL" id="BC128263">
    <property type="protein sequence ID" value="AAI28264.1"/>
    <property type="molecule type" value="mRNA"/>
</dbReference>
<dbReference type="CCDS" id="CCDS8021.3"/>
<dbReference type="RefSeq" id="NP_073741.3">
    <property type="nucleotide sequence ID" value="NM_022830.3"/>
</dbReference>
<dbReference type="PDB" id="2E5G">
    <property type="method" value="NMR"/>
    <property type="chains" value="A=55-141"/>
</dbReference>
<dbReference type="PDB" id="5WU1">
    <property type="method" value="X-ray"/>
    <property type="resolution" value="2.80 A"/>
    <property type="chains" value="A/B=141-874"/>
</dbReference>
<dbReference type="PDB" id="5WU2">
    <property type="method" value="X-ray"/>
    <property type="resolution" value="2.95 A"/>
    <property type="chains" value="A/B=141-874"/>
</dbReference>
<dbReference type="PDB" id="5WU3">
    <property type="method" value="X-ray"/>
    <property type="resolution" value="2.70 A"/>
    <property type="chains" value="A/B=141-874"/>
</dbReference>
<dbReference type="PDB" id="5WU4">
    <property type="method" value="X-ray"/>
    <property type="resolution" value="2.80 A"/>
    <property type="chains" value="A/B=141-874"/>
</dbReference>
<dbReference type="PDB" id="5WU5">
    <property type="method" value="X-ray"/>
    <property type="resolution" value="3.40 A"/>
    <property type="chains" value="A/B/C/D=141-874"/>
</dbReference>
<dbReference type="PDB" id="5WU6">
    <property type="method" value="X-ray"/>
    <property type="resolution" value="3.21 A"/>
    <property type="chains" value="A/B/C/D=53-599"/>
</dbReference>
<dbReference type="PDB" id="8IDF">
    <property type="method" value="X-ray"/>
    <property type="resolution" value="3.70 A"/>
    <property type="chains" value="A=1-599"/>
</dbReference>
<dbReference type="PDB" id="9J8P">
    <property type="method" value="EM"/>
    <property type="resolution" value="3.21 A"/>
    <property type="chains" value="A=1-874"/>
</dbReference>
<dbReference type="PDBsum" id="2E5G"/>
<dbReference type="PDBsum" id="5WU1"/>
<dbReference type="PDBsum" id="5WU2"/>
<dbReference type="PDBsum" id="5WU3"/>
<dbReference type="PDBsum" id="5WU4"/>
<dbReference type="PDBsum" id="5WU5"/>
<dbReference type="PDBsum" id="5WU6"/>
<dbReference type="PDBsum" id="8IDF"/>
<dbReference type="PDBsum" id="9J8P"/>
<dbReference type="EMDB" id="EMD-61237"/>
<dbReference type="SMR" id="Q9H6E5"/>
<dbReference type="BioGRID" id="122325">
    <property type="interactions" value="68"/>
</dbReference>
<dbReference type="DIP" id="DIP-53651N"/>
<dbReference type="FunCoup" id="Q9H6E5">
    <property type="interactions" value="3581"/>
</dbReference>
<dbReference type="IntAct" id="Q9H6E5">
    <property type="interactions" value="48"/>
</dbReference>
<dbReference type="MINT" id="Q9H6E5"/>
<dbReference type="STRING" id="9606.ENSP00000308000"/>
<dbReference type="GlyGen" id="Q9H6E5">
    <property type="glycosylation" value="1 site"/>
</dbReference>
<dbReference type="iPTMnet" id="Q9H6E5"/>
<dbReference type="MetOSite" id="Q9H6E5"/>
<dbReference type="PhosphoSitePlus" id="Q9H6E5"/>
<dbReference type="SwissPalm" id="Q9H6E5"/>
<dbReference type="BioMuta" id="TUT1"/>
<dbReference type="DMDM" id="126302611"/>
<dbReference type="jPOST" id="Q9H6E5"/>
<dbReference type="MassIVE" id="Q9H6E5"/>
<dbReference type="PaxDb" id="9606-ENSP00000308000"/>
<dbReference type="PeptideAtlas" id="Q9H6E5"/>
<dbReference type="ProteomicsDB" id="80983"/>
<dbReference type="Pumba" id="Q9H6E5"/>
<dbReference type="Antibodypedia" id="28452">
    <property type="antibodies" value="87 antibodies from 17 providers"/>
</dbReference>
<dbReference type="DNASU" id="64852"/>
<dbReference type="Ensembl" id="ENST00000476907.6">
    <property type="protein sequence ID" value="ENSP00000419607.1"/>
    <property type="gene ID" value="ENSG00000149016.16"/>
</dbReference>
<dbReference type="GeneID" id="64852"/>
<dbReference type="KEGG" id="hsa:64852"/>
<dbReference type="MANE-Select" id="ENST00000476907.6">
    <property type="protein sequence ID" value="ENSP00000419607.1"/>
    <property type="RefSeq nucleotide sequence ID" value="NM_022830.3"/>
    <property type="RefSeq protein sequence ID" value="NP_073741.3"/>
</dbReference>
<dbReference type="UCSC" id="uc058cig.1">
    <property type="organism name" value="human"/>
</dbReference>
<dbReference type="AGR" id="HGNC:26184"/>
<dbReference type="CTD" id="64852"/>
<dbReference type="DisGeNET" id="64852"/>
<dbReference type="GeneCards" id="TUT1"/>
<dbReference type="HGNC" id="HGNC:26184">
    <property type="gene designation" value="TUT1"/>
</dbReference>
<dbReference type="HPA" id="ENSG00000149016">
    <property type="expression patterns" value="Low tissue specificity"/>
</dbReference>
<dbReference type="MIM" id="610641">
    <property type="type" value="gene"/>
</dbReference>
<dbReference type="neXtProt" id="NX_Q9H6E5"/>
<dbReference type="OpenTargets" id="ENSG00000149016"/>
<dbReference type="PharmGKB" id="PA162407405"/>
<dbReference type="VEuPathDB" id="HostDB:ENSG00000149016"/>
<dbReference type="eggNOG" id="KOG2277">
    <property type="taxonomic scope" value="Eukaryota"/>
</dbReference>
<dbReference type="GeneTree" id="ENSGT00940000159914"/>
<dbReference type="HOGENOM" id="CLU_018757_1_0_1"/>
<dbReference type="InParanoid" id="Q9H6E5"/>
<dbReference type="OrthoDB" id="2274644at2759"/>
<dbReference type="PAN-GO" id="Q9H6E5">
    <property type="GO annotations" value="3 GO annotations based on evolutionary models"/>
</dbReference>
<dbReference type="PhylomeDB" id="Q9H6E5"/>
<dbReference type="BRENDA" id="2.7.7.19">
    <property type="organism ID" value="2681"/>
</dbReference>
<dbReference type="PathwayCommons" id="Q9H6E5"/>
<dbReference type="SABIO-RK" id="Q9H6E5"/>
<dbReference type="SignaLink" id="Q9H6E5"/>
<dbReference type="SIGNOR" id="Q9H6E5"/>
<dbReference type="BioGRID-ORCS" id="64852">
    <property type="hits" value="815 hits in 1139 CRISPR screens"/>
</dbReference>
<dbReference type="ChiTaRS" id="TUT1">
    <property type="organism name" value="human"/>
</dbReference>
<dbReference type="EvolutionaryTrace" id="Q9H6E5"/>
<dbReference type="GenomeRNAi" id="64852"/>
<dbReference type="Pharos" id="Q9H6E5">
    <property type="development level" value="Tbio"/>
</dbReference>
<dbReference type="PRO" id="PR:Q9H6E5"/>
<dbReference type="Proteomes" id="UP000005640">
    <property type="component" value="Chromosome 11"/>
</dbReference>
<dbReference type="RNAct" id="Q9H6E5">
    <property type="molecule type" value="protein"/>
</dbReference>
<dbReference type="Bgee" id="ENSG00000149016">
    <property type="expression patterns" value="Expressed in cerebellar vermis and 179 other cell types or tissues"/>
</dbReference>
<dbReference type="ExpressionAtlas" id="Q9H6E5">
    <property type="expression patterns" value="baseline and differential"/>
</dbReference>
<dbReference type="GO" id="GO:0005829">
    <property type="term" value="C:cytosol"/>
    <property type="evidence" value="ECO:0000314"/>
    <property type="project" value="HPA"/>
</dbReference>
<dbReference type="GO" id="GO:0005847">
    <property type="term" value="C:mRNA cleavage and polyadenylation specificity factor complex"/>
    <property type="evidence" value="ECO:0000314"/>
    <property type="project" value="UniProtKB"/>
</dbReference>
<dbReference type="GO" id="GO:0016607">
    <property type="term" value="C:nuclear speck"/>
    <property type="evidence" value="ECO:0000314"/>
    <property type="project" value="UniProtKB"/>
</dbReference>
<dbReference type="GO" id="GO:0005730">
    <property type="term" value="C:nucleolus"/>
    <property type="evidence" value="ECO:0000314"/>
    <property type="project" value="UniProtKB"/>
</dbReference>
<dbReference type="GO" id="GO:0005654">
    <property type="term" value="C:nucleoplasm"/>
    <property type="evidence" value="ECO:0000314"/>
    <property type="project" value="HPA"/>
</dbReference>
<dbReference type="GO" id="GO:0005524">
    <property type="term" value="F:ATP binding"/>
    <property type="evidence" value="ECO:0007669"/>
    <property type="project" value="UniProtKB-KW"/>
</dbReference>
<dbReference type="GO" id="GO:0019899">
    <property type="term" value="F:enzyme binding"/>
    <property type="evidence" value="ECO:0000353"/>
    <property type="project" value="UniProtKB"/>
</dbReference>
<dbReference type="GO" id="GO:0140767">
    <property type="term" value="F:enzyme-substrate adaptor activity"/>
    <property type="evidence" value="ECO:0000314"/>
    <property type="project" value="UniProtKB"/>
</dbReference>
<dbReference type="GO" id="GO:0003730">
    <property type="term" value="F:mRNA 3'-UTR binding"/>
    <property type="evidence" value="ECO:0000314"/>
    <property type="project" value="UniProtKB"/>
</dbReference>
<dbReference type="GO" id="GO:1990817">
    <property type="term" value="F:poly(A) RNA polymerase activity"/>
    <property type="evidence" value="ECO:0000314"/>
    <property type="project" value="UniProtKB"/>
</dbReference>
<dbReference type="GO" id="GO:0003723">
    <property type="term" value="F:RNA binding"/>
    <property type="evidence" value="ECO:0000314"/>
    <property type="project" value="UniProtKB"/>
</dbReference>
<dbReference type="GO" id="GO:0050265">
    <property type="term" value="F:RNA uridylyltransferase activity"/>
    <property type="evidence" value="ECO:0000314"/>
    <property type="project" value="UniProtKB"/>
</dbReference>
<dbReference type="GO" id="GO:0017070">
    <property type="term" value="F:U6 snRNA binding"/>
    <property type="evidence" value="ECO:0000314"/>
    <property type="project" value="UniProtKB"/>
</dbReference>
<dbReference type="GO" id="GO:0008270">
    <property type="term" value="F:zinc ion binding"/>
    <property type="evidence" value="ECO:0007669"/>
    <property type="project" value="UniProtKB-KW"/>
</dbReference>
<dbReference type="GO" id="GO:0180010">
    <property type="term" value="P:co-transcriptional mRNA 3'-end processing, cleavage and polyadenylation pathway"/>
    <property type="evidence" value="ECO:0000314"/>
    <property type="project" value="UniProtKB"/>
</dbReference>
<dbReference type="GO" id="GO:0031124">
    <property type="term" value="P:mRNA 3'-end processing"/>
    <property type="evidence" value="ECO:0000315"/>
    <property type="project" value="UniProtKB"/>
</dbReference>
<dbReference type="GO" id="GO:0051252">
    <property type="term" value="P:regulation of RNA metabolic process"/>
    <property type="evidence" value="ECO:0000314"/>
    <property type="project" value="UniProt"/>
</dbReference>
<dbReference type="GO" id="GO:0031123">
    <property type="term" value="P:RNA 3'-end processing"/>
    <property type="evidence" value="ECO:0000318"/>
    <property type="project" value="GO_Central"/>
</dbReference>
<dbReference type="GO" id="GO:0016180">
    <property type="term" value="P:snRNA processing"/>
    <property type="evidence" value="ECO:0000315"/>
    <property type="project" value="UniProtKB"/>
</dbReference>
<dbReference type="GO" id="GO:0034477">
    <property type="term" value="P:U6 snRNA 3'-end processing"/>
    <property type="evidence" value="ECO:0000314"/>
    <property type="project" value="UniProtKB"/>
</dbReference>
<dbReference type="CDD" id="cd05402">
    <property type="entry name" value="NT_PAP_TUTase"/>
    <property type="match status" value="1"/>
</dbReference>
<dbReference type="CDD" id="cd12279">
    <property type="entry name" value="RRM_TUT1"/>
    <property type="match status" value="1"/>
</dbReference>
<dbReference type="FunFam" id="1.10.1410.10:FF:000008">
    <property type="entry name" value="speckle targeted PIP5K1A-regulated poly(A) polymerase"/>
    <property type="match status" value="1"/>
</dbReference>
<dbReference type="FunFam" id="3.30.70.330:FF:000305">
    <property type="entry name" value="speckle targeted PIP5K1A-regulated poly(A) polymerase"/>
    <property type="match status" value="1"/>
</dbReference>
<dbReference type="Gene3D" id="1.10.1410.10">
    <property type="match status" value="1"/>
</dbReference>
<dbReference type="Gene3D" id="3.30.70.330">
    <property type="match status" value="1"/>
</dbReference>
<dbReference type="InterPro" id="IPR054708">
    <property type="entry name" value="MTPAP-like_central"/>
</dbReference>
<dbReference type="InterPro" id="IPR043519">
    <property type="entry name" value="NT_sf"/>
</dbReference>
<dbReference type="InterPro" id="IPR012677">
    <property type="entry name" value="Nucleotide-bd_a/b_plait_sf"/>
</dbReference>
<dbReference type="InterPro" id="IPR002058">
    <property type="entry name" value="PAP_assoc"/>
</dbReference>
<dbReference type="InterPro" id="IPR035979">
    <property type="entry name" value="RBD_domain_sf"/>
</dbReference>
<dbReference type="InterPro" id="IPR000504">
    <property type="entry name" value="RRM_dom"/>
</dbReference>
<dbReference type="InterPro" id="IPR034388">
    <property type="entry name" value="Star-PAP_RRM"/>
</dbReference>
<dbReference type="InterPro" id="IPR036236">
    <property type="entry name" value="Znf_C2H2_sf"/>
</dbReference>
<dbReference type="InterPro" id="IPR013087">
    <property type="entry name" value="Znf_C2H2_type"/>
</dbReference>
<dbReference type="PANTHER" id="PTHR12271">
    <property type="entry name" value="POLY A POLYMERASE CID PAP -RELATED"/>
    <property type="match status" value="1"/>
</dbReference>
<dbReference type="PANTHER" id="PTHR12271:SF127">
    <property type="entry name" value="SPECKLE TARGETED PIP5K1A-REGULATED POLY(A) POLYMERASE"/>
    <property type="match status" value="1"/>
</dbReference>
<dbReference type="Pfam" id="PF22600">
    <property type="entry name" value="MTPAP-like_central"/>
    <property type="match status" value="2"/>
</dbReference>
<dbReference type="Pfam" id="PF03828">
    <property type="entry name" value="PAP_assoc"/>
    <property type="match status" value="1"/>
</dbReference>
<dbReference type="Pfam" id="PF00076">
    <property type="entry name" value="RRM_1"/>
    <property type="match status" value="1"/>
</dbReference>
<dbReference type="Pfam" id="PF12874">
    <property type="entry name" value="zf-met"/>
    <property type="match status" value="1"/>
</dbReference>
<dbReference type="SMART" id="SM00360">
    <property type="entry name" value="RRM"/>
    <property type="match status" value="1"/>
</dbReference>
<dbReference type="SUPFAM" id="SSF57667">
    <property type="entry name" value="beta-beta-alpha zinc fingers"/>
    <property type="match status" value="1"/>
</dbReference>
<dbReference type="SUPFAM" id="SSF81301">
    <property type="entry name" value="Nucleotidyltransferase"/>
    <property type="match status" value="1"/>
</dbReference>
<dbReference type="SUPFAM" id="SSF81631">
    <property type="entry name" value="PAP/OAS1 substrate-binding domain"/>
    <property type="match status" value="1"/>
</dbReference>
<dbReference type="SUPFAM" id="SSF54928">
    <property type="entry name" value="RNA-binding domain, RBD"/>
    <property type="match status" value="1"/>
</dbReference>
<dbReference type="PROSITE" id="PS50102">
    <property type="entry name" value="RRM"/>
    <property type="match status" value="1"/>
</dbReference>
<reference key="1">
    <citation type="journal article" date="2004" name="Nat. Genet.">
        <title>Complete sequencing and characterization of 21,243 full-length human cDNAs.</title>
        <authorList>
            <person name="Ota T."/>
            <person name="Suzuki Y."/>
            <person name="Nishikawa T."/>
            <person name="Otsuki T."/>
            <person name="Sugiyama T."/>
            <person name="Irie R."/>
            <person name="Wakamatsu A."/>
            <person name="Hayashi K."/>
            <person name="Sato H."/>
            <person name="Nagai K."/>
            <person name="Kimura K."/>
            <person name="Makita H."/>
            <person name="Sekine M."/>
            <person name="Obayashi M."/>
            <person name="Nishi T."/>
            <person name="Shibahara T."/>
            <person name="Tanaka T."/>
            <person name="Ishii S."/>
            <person name="Yamamoto J."/>
            <person name="Saito K."/>
            <person name="Kawai Y."/>
            <person name="Isono Y."/>
            <person name="Nakamura Y."/>
            <person name="Nagahari K."/>
            <person name="Murakami K."/>
            <person name="Yasuda T."/>
            <person name="Iwayanagi T."/>
            <person name="Wagatsuma M."/>
            <person name="Shiratori A."/>
            <person name="Sudo H."/>
            <person name="Hosoiri T."/>
            <person name="Kaku Y."/>
            <person name="Kodaira H."/>
            <person name="Kondo H."/>
            <person name="Sugawara M."/>
            <person name="Takahashi M."/>
            <person name="Kanda K."/>
            <person name="Yokoi T."/>
            <person name="Furuya T."/>
            <person name="Kikkawa E."/>
            <person name="Omura Y."/>
            <person name="Abe K."/>
            <person name="Kamihara K."/>
            <person name="Katsuta N."/>
            <person name="Sato K."/>
            <person name="Tanikawa M."/>
            <person name="Yamazaki M."/>
            <person name="Ninomiya K."/>
            <person name="Ishibashi T."/>
            <person name="Yamashita H."/>
            <person name="Murakawa K."/>
            <person name="Fujimori K."/>
            <person name="Tanai H."/>
            <person name="Kimata M."/>
            <person name="Watanabe M."/>
            <person name="Hiraoka S."/>
            <person name="Chiba Y."/>
            <person name="Ishida S."/>
            <person name="Ono Y."/>
            <person name="Takiguchi S."/>
            <person name="Watanabe S."/>
            <person name="Yosida M."/>
            <person name="Hotuta T."/>
            <person name="Kusano J."/>
            <person name="Kanehori K."/>
            <person name="Takahashi-Fujii A."/>
            <person name="Hara H."/>
            <person name="Tanase T.-O."/>
            <person name="Nomura Y."/>
            <person name="Togiya S."/>
            <person name="Komai F."/>
            <person name="Hara R."/>
            <person name="Takeuchi K."/>
            <person name="Arita M."/>
            <person name="Imose N."/>
            <person name="Musashino K."/>
            <person name="Yuuki H."/>
            <person name="Oshima A."/>
            <person name="Sasaki N."/>
            <person name="Aotsuka S."/>
            <person name="Yoshikawa Y."/>
            <person name="Matsunawa H."/>
            <person name="Ichihara T."/>
            <person name="Shiohata N."/>
            <person name="Sano S."/>
            <person name="Moriya S."/>
            <person name="Momiyama H."/>
            <person name="Satoh N."/>
            <person name="Takami S."/>
            <person name="Terashima Y."/>
            <person name="Suzuki O."/>
            <person name="Nakagawa S."/>
            <person name="Senoh A."/>
            <person name="Mizoguchi H."/>
            <person name="Goto Y."/>
            <person name="Shimizu F."/>
            <person name="Wakebe H."/>
            <person name="Hishigaki H."/>
            <person name="Watanabe T."/>
            <person name="Sugiyama A."/>
            <person name="Takemoto M."/>
            <person name="Kawakami B."/>
            <person name="Yamazaki M."/>
            <person name="Watanabe K."/>
            <person name="Kumagai A."/>
            <person name="Itakura S."/>
            <person name="Fukuzumi Y."/>
            <person name="Fujimori Y."/>
            <person name="Komiyama M."/>
            <person name="Tashiro H."/>
            <person name="Tanigami A."/>
            <person name="Fujiwara T."/>
            <person name="Ono T."/>
            <person name="Yamada K."/>
            <person name="Fujii Y."/>
            <person name="Ozaki K."/>
            <person name="Hirao M."/>
            <person name="Ohmori Y."/>
            <person name="Kawabata A."/>
            <person name="Hikiji T."/>
            <person name="Kobatake N."/>
            <person name="Inagaki H."/>
            <person name="Ikema Y."/>
            <person name="Okamoto S."/>
            <person name="Okitani R."/>
            <person name="Kawakami T."/>
            <person name="Noguchi S."/>
            <person name="Itoh T."/>
            <person name="Shigeta K."/>
            <person name="Senba T."/>
            <person name="Matsumura K."/>
            <person name="Nakajima Y."/>
            <person name="Mizuno T."/>
            <person name="Morinaga M."/>
            <person name="Sasaki M."/>
            <person name="Togashi T."/>
            <person name="Oyama M."/>
            <person name="Hata H."/>
            <person name="Watanabe M."/>
            <person name="Komatsu T."/>
            <person name="Mizushima-Sugano J."/>
            <person name="Satoh T."/>
            <person name="Shirai Y."/>
            <person name="Takahashi Y."/>
            <person name="Nakagawa K."/>
            <person name="Okumura K."/>
            <person name="Nagase T."/>
            <person name="Nomura N."/>
            <person name="Kikuchi H."/>
            <person name="Masuho Y."/>
            <person name="Yamashita R."/>
            <person name="Nakai K."/>
            <person name="Yada T."/>
            <person name="Nakamura Y."/>
            <person name="Ohara O."/>
            <person name="Isogai T."/>
            <person name="Sugano S."/>
        </authorList>
    </citation>
    <scope>NUCLEOTIDE SEQUENCE [LARGE SCALE MRNA]</scope>
    <source>
        <tissue>Testis</tissue>
    </source>
</reference>
<reference key="2">
    <citation type="journal article" date="2006" name="Nature">
        <title>Human chromosome 11 DNA sequence and analysis including novel gene identification.</title>
        <authorList>
            <person name="Taylor T.D."/>
            <person name="Noguchi H."/>
            <person name="Totoki Y."/>
            <person name="Toyoda A."/>
            <person name="Kuroki Y."/>
            <person name="Dewar K."/>
            <person name="Lloyd C."/>
            <person name="Itoh T."/>
            <person name="Takeda T."/>
            <person name="Kim D.-W."/>
            <person name="She X."/>
            <person name="Barlow K.F."/>
            <person name="Bloom T."/>
            <person name="Bruford E."/>
            <person name="Chang J.L."/>
            <person name="Cuomo C.A."/>
            <person name="Eichler E."/>
            <person name="FitzGerald M.G."/>
            <person name="Jaffe D.B."/>
            <person name="LaButti K."/>
            <person name="Nicol R."/>
            <person name="Park H.-S."/>
            <person name="Seaman C."/>
            <person name="Sougnez C."/>
            <person name="Yang X."/>
            <person name="Zimmer A.R."/>
            <person name="Zody M.C."/>
            <person name="Birren B.W."/>
            <person name="Nusbaum C."/>
            <person name="Fujiyama A."/>
            <person name="Hattori M."/>
            <person name="Rogers J."/>
            <person name="Lander E.S."/>
            <person name="Sakaki Y."/>
        </authorList>
    </citation>
    <scope>NUCLEOTIDE SEQUENCE [LARGE SCALE GENOMIC DNA]</scope>
</reference>
<reference key="3">
    <citation type="submission" date="2005-07" db="EMBL/GenBank/DDBJ databases">
        <authorList>
            <person name="Mural R.J."/>
            <person name="Istrail S."/>
            <person name="Sutton G.G."/>
            <person name="Florea L."/>
            <person name="Halpern A.L."/>
            <person name="Mobarry C.M."/>
            <person name="Lippert R."/>
            <person name="Walenz B."/>
            <person name="Shatkay H."/>
            <person name="Dew I."/>
            <person name="Miller J.R."/>
            <person name="Flanigan M.J."/>
            <person name="Edwards N.J."/>
            <person name="Bolanos R."/>
            <person name="Fasulo D."/>
            <person name="Halldorsson B.V."/>
            <person name="Hannenhalli S."/>
            <person name="Turner R."/>
            <person name="Yooseph S."/>
            <person name="Lu F."/>
            <person name="Nusskern D.R."/>
            <person name="Shue B.C."/>
            <person name="Zheng X.H."/>
            <person name="Zhong F."/>
            <person name="Delcher A.L."/>
            <person name="Huson D.H."/>
            <person name="Kravitz S.A."/>
            <person name="Mouchard L."/>
            <person name="Reinert K."/>
            <person name="Remington K.A."/>
            <person name="Clark A.G."/>
            <person name="Waterman M.S."/>
            <person name="Eichler E.E."/>
            <person name="Adams M.D."/>
            <person name="Hunkapiller M.W."/>
            <person name="Myers E.W."/>
            <person name="Venter J.C."/>
        </authorList>
    </citation>
    <scope>NUCLEOTIDE SEQUENCE [LARGE SCALE GENOMIC DNA]</scope>
</reference>
<reference key="4">
    <citation type="journal article" date="2004" name="Genome Res.">
        <title>The status, quality, and expansion of the NIH full-length cDNA project: the Mammalian Gene Collection (MGC).</title>
        <authorList>
            <consortium name="The MGC Project Team"/>
        </authorList>
    </citation>
    <scope>NUCLEOTIDE SEQUENCE [LARGE SCALE MRNA]</scope>
    <source>
        <tissue>Colon</tissue>
        <tissue>Eye</tissue>
    </source>
</reference>
<reference key="5">
    <citation type="journal article" date="2006" name="RNA">
        <title>Identification, cloning, and functional analysis of the human U6 snRNA-specific terminal uridylyl transferase.</title>
        <authorList>
            <person name="Trippe R."/>
            <person name="Guschina E."/>
            <person name="Hossbach M."/>
            <person name="Urlaub H."/>
            <person name="Luehrmann R."/>
            <person name="Benecke B.-J."/>
        </authorList>
    </citation>
    <scope>PARTIAL PROTEIN SEQUENCE</scope>
    <scope>FUNCTION AS URIDYLYLTRANSFERASE</scope>
    <scope>CATALYTIC ACTIVITY</scope>
    <scope>SUBCELLULAR LOCATION</scope>
</reference>
<reference key="6">
    <citation type="journal article" date="2008" name="Genes Dev.">
        <title>Degradation of histone mRNA requires oligouridylation followed by decapping and simultaneous degradation of the mRNA both 5' to 3' and 3' to 5'.</title>
        <authorList>
            <person name="Mullen T.E."/>
            <person name="Marzluff W.F."/>
        </authorList>
    </citation>
    <scope>LACK OF FUNCTION IN HISTONE MRNA DEGRADATION ACTIVITY</scope>
</reference>
<reference key="7">
    <citation type="journal article" date="2008" name="Nature">
        <title>A PtdIns4,5P2-regulated nuclear poly(A) polymerase controls expression of select mRNAs.</title>
        <authorList>
            <person name="Mellman D.L."/>
            <person name="Gonzales M.L."/>
            <person name="Song C."/>
            <person name="Barlow C.A."/>
            <person name="Wang P."/>
            <person name="Kendziorski C."/>
            <person name="Anderson R.A."/>
        </authorList>
    </citation>
    <scope>FUNCTION AS ADENYLYLTRANSFERASE</scope>
    <scope>CATALYTIC ACTIVITY</scope>
    <scope>ACTIVITY REGULATION</scope>
    <scope>SUBCELLULAR LOCATION</scope>
    <scope>RNA-BINDING</scope>
    <scope>INTERACTION WITH PIP5K1A</scope>
    <scope>TISSUE SPECIFICITY</scope>
    <scope>MUTAGENESIS OF ASP-216 AND ASP-218</scope>
</reference>
<reference key="8">
    <citation type="journal article" date="2008" name="J. Biol. Chem.">
        <title>CKIalpha is associated with and phosphorylates star-PAP and is also required for expression of select star-PAP target messenger RNAs.</title>
        <authorList>
            <person name="Gonzales M.L."/>
            <person name="Mellman D.L."/>
            <person name="Anderson R.A."/>
        </authorList>
    </citation>
    <scope>SUBCELLULAR LOCATION</scope>
    <scope>PHOSPHORYLATION BY CK1</scope>
</reference>
<reference key="9">
    <citation type="journal article" date="2010" name="EMBO J.">
        <title>The poly A polymerase Star-PAP controls 3'-end cleavage by promoting CPSF interaction and specificity toward the pre-mRNA.</title>
        <authorList>
            <person name="Laishram R.S."/>
            <person name="Anderson R.A."/>
        </authorList>
    </citation>
    <scope>FUNCTION AS ADENYLYLTRANSFERASE</scope>
    <scope>CATALYTIC ACTIVITY</scope>
    <scope>RNA-BINDING</scope>
    <scope>INTERACTION WITH CPSF1 AND CPSF3</scope>
</reference>
<reference key="10">
    <citation type="submission" date="2007-06" db="PDB data bank">
        <title>Solution structure of RNA binding domain in RNA binding motif protein 21.</title>
        <authorList>
            <consortium name="RIKEN structural genomics initiative (RSGI)"/>
        </authorList>
    </citation>
    <scope>STRUCTURE BY NMR OF 54-141</scope>
</reference>
<reference evidence="14 15 16 17 18 19" key="11">
    <citation type="journal article" date="2017" name="Nat. Commun.">
        <title>Crystal structures of U6 snRNA-specific terminal uridylyltransferase.</title>
        <authorList>
            <person name="Yamashita S."/>
            <person name="Takagi Y."/>
            <person name="Nagaike T."/>
            <person name="Tomita K."/>
        </authorList>
    </citation>
    <scope>X-RAY CRYSTALLOGRAPHY (2.70 ANGSTROMS) OF 141-874 IN COMPLEX WITH MAGNESIUM; ATP AND UDP</scope>
    <scope>FUNCTION</scope>
    <scope>CATALYTIC ACTIVITY</scope>
    <scope>BIOPHYSICOCHEMICAL PROPERTIES</scope>
    <scope>DOMAIN</scope>
    <scope>MUTAGENESIS OF ARG-779 AND ARG-783</scope>
</reference>
<keyword id="KW-0002">3D-structure</keyword>
<keyword id="KW-0067">ATP-binding</keyword>
<keyword id="KW-0903">Direct protein sequencing</keyword>
<keyword id="KW-0460">Magnesium</keyword>
<keyword id="KW-0464">Manganese</keyword>
<keyword id="KW-0479">Metal-binding</keyword>
<keyword id="KW-0507">mRNA processing</keyword>
<keyword id="KW-0547">Nucleotide-binding</keyword>
<keyword id="KW-0548">Nucleotidyltransferase</keyword>
<keyword id="KW-0539">Nucleus</keyword>
<keyword id="KW-0597">Phosphoprotein</keyword>
<keyword id="KW-1267">Proteomics identification</keyword>
<keyword id="KW-1185">Reference proteome</keyword>
<keyword id="KW-0694">RNA-binding</keyword>
<keyword id="KW-0808">Transferase</keyword>
<keyword id="KW-0862">Zinc</keyword>
<keyword id="KW-0863">Zinc-finger</keyword>
<proteinExistence type="evidence at protein level"/>
<sequence>MAAVDSDVESLPRGGFRCCLCHVTTANRPSLDAHLGGRKHRHLVELRAARKAQGLRSVFVSGFPRDVDSAQLSEYFLAFGPVASVVMDKDKGVFAIVEMGDVGAREAVLSQSQHSLGGHRLRVRPREQKEFQSPASKSPKGAAPDSHQLAKALAEAADVGAQMIKLVGLRELSEAERQLRSLVVALMQEVFTEFFPGCVVHPFGSSINSFDVHGCDLDLFLDLGDLEEPQPVPKAPESPSLDSALASPLDPQALACTPASPPDSQPPASPQDSEALDFETPSSSLAPQTPDSALASETLASPQSLPPASPLLEDREEGDLGKASELAETPKEEKAEGAAMLELVGSILRGCVPGVYRVQTVPSARRPVVKFCHRPSGLHGDVSLSNRLALHNSRFLSLCSELDGRVRPLVYTLRCWAQGRGLSGSGPLLSNYALTLLVIYFLQTRDPPVLPTVSQLTQKAGEGEQVEVDGWDCSFPRDASRLEPSINVEPLSSLLAQFFSCVSCWDLRGSLLSLREGQALPVAGGLPSNLWEGLRLGPLNLQDPFDLSHNVAANVTSRVAGRLQNCCRAAANYCRSLQYQRRSSRGRDWGLLPLLQPSSPSSLLSATPIPLPLAPFTQLTAALVQVFREALGCHIEQATKRTRSEGGGTGESSQGGTSKRLKVDGQKNCCEEGKEEQQGCAGDGGEDRVEEMVIEVGEMVQDWAMQSPGQPGDLPLTTGKHGAPGEEGQPSHAALAERGPKGHEAAQEWSQGEAGKGASLPSSASWRCALWHRVWQGRRRARRRLQQQTKEGAGGGAGTRAGWLATEAQVTQELKGLSGGEERPETEPLLSFVASVSPADRMLTVTPLQDPQGLFPDLHHFLQVFLPQAIRHLK</sequence>
<evidence type="ECO:0000250" key="1">
    <source>
        <dbReference type="UniProtKB" id="Q3MHT4"/>
    </source>
</evidence>
<evidence type="ECO:0000250" key="2">
    <source>
        <dbReference type="UniProtKB" id="Q9NVV4"/>
    </source>
</evidence>
<evidence type="ECO:0000255" key="3"/>
<evidence type="ECO:0000255" key="4">
    <source>
        <dbReference type="PROSITE-ProRule" id="PRU00130"/>
    </source>
</evidence>
<evidence type="ECO:0000255" key="5">
    <source>
        <dbReference type="PROSITE-ProRule" id="PRU00176"/>
    </source>
</evidence>
<evidence type="ECO:0000256" key="6">
    <source>
        <dbReference type="SAM" id="MobiDB-lite"/>
    </source>
</evidence>
<evidence type="ECO:0000269" key="7">
    <source>
    </source>
</evidence>
<evidence type="ECO:0000269" key="8">
    <source>
    </source>
</evidence>
<evidence type="ECO:0000269" key="9">
    <source>
    </source>
</evidence>
<evidence type="ECO:0000269" key="10">
    <source>
    </source>
</evidence>
<evidence type="ECO:0000269" key="11">
    <source>
    </source>
</evidence>
<evidence type="ECO:0000305" key="12"/>
<evidence type="ECO:0000305" key="13">
    <source>
    </source>
</evidence>
<evidence type="ECO:0007744" key="14">
    <source>
        <dbReference type="PDB" id="5WU1"/>
    </source>
</evidence>
<evidence type="ECO:0007744" key="15">
    <source>
        <dbReference type="PDB" id="5WU2"/>
    </source>
</evidence>
<evidence type="ECO:0007744" key="16">
    <source>
        <dbReference type="PDB" id="5WU3"/>
    </source>
</evidence>
<evidence type="ECO:0007744" key="17">
    <source>
        <dbReference type="PDB" id="5WU4"/>
    </source>
</evidence>
<evidence type="ECO:0007744" key="18">
    <source>
        <dbReference type="PDB" id="5WU5"/>
    </source>
</evidence>
<evidence type="ECO:0007744" key="19">
    <source>
        <dbReference type="PDB" id="5WU6"/>
    </source>
</evidence>
<evidence type="ECO:0007829" key="20">
    <source>
        <dbReference type="PDB" id="5WU3"/>
    </source>
</evidence>
<evidence type="ECO:0007829" key="21">
    <source>
        <dbReference type="PDB" id="5WU5"/>
    </source>
</evidence>
<evidence type="ECO:0007829" key="22">
    <source>
        <dbReference type="PDB" id="5WU6"/>
    </source>
</evidence>
<protein>
    <recommendedName>
        <fullName>Speckle targeted PIP5K1A-regulated poly(A) polymerase</fullName>
        <shortName>Star-PAP</shortName>
        <ecNumber evidence="8 10 11">2.7.7.19</ecNumber>
    </recommendedName>
    <alternativeName>
        <fullName>RNA-binding motif protein 21</fullName>
        <shortName>RNA-binding protein 21</shortName>
    </alternativeName>
    <alternativeName>
        <fullName>U6 snRNA-specific terminal uridylyltransferase 1</fullName>
        <shortName>U6-TUTase</shortName>
        <ecNumber evidence="7 8 11">2.7.7.52</ecNumber>
    </alternativeName>
</protein>
<gene>
    <name type="primary">TUT1</name>
    <name type="synonym">RBM21</name>
</gene>
<accession>Q9H6E5</accession>
<accession>A1A527</accession>
<accession>A8K995</accession>
<accession>Q2NL65</accession>
<accession>Q7L583</accession>
<accession>Q9H6H7</accession>